<organism>
    <name type="scientific">Streptococcus pneumoniae (strain CGSP14)</name>
    <dbReference type="NCBI Taxonomy" id="516950"/>
    <lineage>
        <taxon>Bacteria</taxon>
        <taxon>Bacillati</taxon>
        <taxon>Bacillota</taxon>
        <taxon>Bacilli</taxon>
        <taxon>Lactobacillales</taxon>
        <taxon>Streptococcaceae</taxon>
        <taxon>Streptococcus</taxon>
    </lineage>
</organism>
<comment type="function">
    <text evidence="1">Catalyzes the conversion of glucosamine-6-phosphate to glucosamine-1-phosphate.</text>
</comment>
<comment type="catalytic activity">
    <reaction evidence="1">
        <text>alpha-D-glucosamine 1-phosphate = D-glucosamine 6-phosphate</text>
        <dbReference type="Rhea" id="RHEA:23424"/>
        <dbReference type="ChEBI" id="CHEBI:58516"/>
        <dbReference type="ChEBI" id="CHEBI:58725"/>
        <dbReference type="EC" id="5.4.2.10"/>
    </reaction>
</comment>
<comment type="cofactor">
    <cofactor evidence="1">
        <name>Mg(2+)</name>
        <dbReference type="ChEBI" id="CHEBI:18420"/>
    </cofactor>
    <text evidence="1">Binds 1 Mg(2+) ion per subunit.</text>
</comment>
<comment type="PTM">
    <text evidence="1">Activated by phosphorylation.</text>
</comment>
<comment type="similarity">
    <text evidence="1">Belongs to the phosphohexose mutase family.</text>
</comment>
<proteinExistence type="inferred from homology"/>
<feature type="chain" id="PRO_1000201146" description="Phosphoglucosamine mutase">
    <location>
        <begin position="1"/>
        <end position="450"/>
    </location>
</feature>
<feature type="active site" description="Phosphoserine intermediate" evidence="1">
    <location>
        <position position="101"/>
    </location>
</feature>
<feature type="binding site" description="via phosphate group" evidence="1">
    <location>
        <position position="101"/>
    </location>
    <ligand>
        <name>Mg(2+)</name>
        <dbReference type="ChEBI" id="CHEBI:18420"/>
    </ligand>
</feature>
<feature type="binding site" evidence="1">
    <location>
        <position position="240"/>
    </location>
    <ligand>
        <name>Mg(2+)</name>
        <dbReference type="ChEBI" id="CHEBI:18420"/>
    </ligand>
</feature>
<feature type="binding site" evidence="1">
    <location>
        <position position="242"/>
    </location>
    <ligand>
        <name>Mg(2+)</name>
        <dbReference type="ChEBI" id="CHEBI:18420"/>
    </ligand>
</feature>
<feature type="binding site" evidence="1">
    <location>
        <position position="244"/>
    </location>
    <ligand>
        <name>Mg(2+)</name>
        <dbReference type="ChEBI" id="CHEBI:18420"/>
    </ligand>
</feature>
<feature type="modified residue" description="Phosphoserine" evidence="1">
    <location>
        <position position="101"/>
    </location>
</feature>
<accession>B2IR78</accession>
<name>GLMM_STRPS</name>
<gene>
    <name evidence="1" type="primary">glmM</name>
    <name type="ordered locus">SPCG_1545</name>
</gene>
<protein>
    <recommendedName>
        <fullName evidence="1">Phosphoglucosamine mutase</fullName>
        <ecNumber evidence="1">5.4.2.10</ecNumber>
    </recommendedName>
</protein>
<dbReference type="EC" id="5.4.2.10" evidence="1"/>
<dbReference type="EMBL" id="CP001033">
    <property type="protein sequence ID" value="ACB90797.1"/>
    <property type="molecule type" value="Genomic_DNA"/>
</dbReference>
<dbReference type="RefSeq" id="WP_000521411.1">
    <property type="nucleotide sequence ID" value="NC_010582.1"/>
</dbReference>
<dbReference type="SMR" id="B2IR78"/>
<dbReference type="KEGG" id="spw:SPCG_1545"/>
<dbReference type="HOGENOM" id="CLU_016950_7_0_9"/>
<dbReference type="GO" id="GO:0005829">
    <property type="term" value="C:cytosol"/>
    <property type="evidence" value="ECO:0007669"/>
    <property type="project" value="TreeGrafter"/>
</dbReference>
<dbReference type="GO" id="GO:0000287">
    <property type="term" value="F:magnesium ion binding"/>
    <property type="evidence" value="ECO:0007669"/>
    <property type="project" value="UniProtKB-UniRule"/>
</dbReference>
<dbReference type="GO" id="GO:0008966">
    <property type="term" value="F:phosphoglucosamine mutase activity"/>
    <property type="evidence" value="ECO:0007669"/>
    <property type="project" value="UniProtKB-UniRule"/>
</dbReference>
<dbReference type="GO" id="GO:0004615">
    <property type="term" value="F:phosphomannomutase activity"/>
    <property type="evidence" value="ECO:0007669"/>
    <property type="project" value="TreeGrafter"/>
</dbReference>
<dbReference type="GO" id="GO:0005975">
    <property type="term" value="P:carbohydrate metabolic process"/>
    <property type="evidence" value="ECO:0007669"/>
    <property type="project" value="InterPro"/>
</dbReference>
<dbReference type="GO" id="GO:0009252">
    <property type="term" value="P:peptidoglycan biosynthetic process"/>
    <property type="evidence" value="ECO:0007669"/>
    <property type="project" value="TreeGrafter"/>
</dbReference>
<dbReference type="GO" id="GO:0006048">
    <property type="term" value="P:UDP-N-acetylglucosamine biosynthetic process"/>
    <property type="evidence" value="ECO:0007669"/>
    <property type="project" value="TreeGrafter"/>
</dbReference>
<dbReference type="CDD" id="cd05802">
    <property type="entry name" value="GlmM"/>
    <property type="match status" value="1"/>
</dbReference>
<dbReference type="FunFam" id="3.30.310.50:FF:000001">
    <property type="entry name" value="Phosphoglucosamine mutase"/>
    <property type="match status" value="1"/>
</dbReference>
<dbReference type="FunFam" id="3.40.120.10:FF:000001">
    <property type="entry name" value="Phosphoglucosamine mutase"/>
    <property type="match status" value="1"/>
</dbReference>
<dbReference type="FunFam" id="3.40.120.10:FF:000002">
    <property type="entry name" value="Phosphoglucosamine mutase"/>
    <property type="match status" value="1"/>
</dbReference>
<dbReference type="Gene3D" id="3.40.120.10">
    <property type="entry name" value="Alpha-D-Glucose-1,6-Bisphosphate, subunit A, domain 3"/>
    <property type="match status" value="3"/>
</dbReference>
<dbReference type="Gene3D" id="3.30.310.50">
    <property type="entry name" value="Alpha-D-phosphohexomutase, C-terminal domain"/>
    <property type="match status" value="1"/>
</dbReference>
<dbReference type="HAMAP" id="MF_01554_B">
    <property type="entry name" value="GlmM_B"/>
    <property type="match status" value="1"/>
</dbReference>
<dbReference type="InterPro" id="IPR005844">
    <property type="entry name" value="A-D-PHexomutase_a/b/a-I"/>
</dbReference>
<dbReference type="InterPro" id="IPR016055">
    <property type="entry name" value="A-D-PHexomutase_a/b/a-I/II/III"/>
</dbReference>
<dbReference type="InterPro" id="IPR005845">
    <property type="entry name" value="A-D-PHexomutase_a/b/a-II"/>
</dbReference>
<dbReference type="InterPro" id="IPR005846">
    <property type="entry name" value="A-D-PHexomutase_a/b/a-III"/>
</dbReference>
<dbReference type="InterPro" id="IPR005843">
    <property type="entry name" value="A-D-PHexomutase_C"/>
</dbReference>
<dbReference type="InterPro" id="IPR036900">
    <property type="entry name" value="A-D-PHexomutase_C_sf"/>
</dbReference>
<dbReference type="InterPro" id="IPR016066">
    <property type="entry name" value="A-D-PHexomutase_CS"/>
</dbReference>
<dbReference type="InterPro" id="IPR005841">
    <property type="entry name" value="Alpha-D-phosphohexomutase_SF"/>
</dbReference>
<dbReference type="InterPro" id="IPR006352">
    <property type="entry name" value="GlmM_bact"/>
</dbReference>
<dbReference type="InterPro" id="IPR050060">
    <property type="entry name" value="Phosphoglucosamine_mutase"/>
</dbReference>
<dbReference type="NCBIfam" id="TIGR01455">
    <property type="entry name" value="glmM"/>
    <property type="match status" value="1"/>
</dbReference>
<dbReference type="PANTHER" id="PTHR42946:SF1">
    <property type="entry name" value="PHOSPHOGLUCOMUTASE (ALPHA-D-GLUCOSE-1,6-BISPHOSPHATE-DEPENDENT)"/>
    <property type="match status" value="1"/>
</dbReference>
<dbReference type="PANTHER" id="PTHR42946">
    <property type="entry name" value="PHOSPHOHEXOSE MUTASE"/>
    <property type="match status" value="1"/>
</dbReference>
<dbReference type="Pfam" id="PF02878">
    <property type="entry name" value="PGM_PMM_I"/>
    <property type="match status" value="1"/>
</dbReference>
<dbReference type="Pfam" id="PF02879">
    <property type="entry name" value="PGM_PMM_II"/>
    <property type="match status" value="1"/>
</dbReference>
<dbReference type="Pfam" id="PF02880">
    <property type="entry name" value="PGM_PMM_III"/>
    <property type="match status" value="1"/>
</dbReference>
<dbReference type="Pfam" id="PF00408">
    <property type="entry name" value="PGM_PMM_IV"/>
    <property type="match status" value="1"/>
</dbReference>
<dbReference type="PRINTS" id="PR00509">
    <property type="entry name" value="PGMPMM"/>
</dbReference>
<dbReference type="SUPFAM" id="SSF55957">
    <property type="entry name" value="Phosphoglucomutase, C-terminal domain"/>
    <property type="match status" value="1"/>
</dbReference>
<dbReference type="SUPFAM" id="SSF53738">
    <property type="entry name" value="Phosphoglucomutase, first 3 domains"/>
    <property type="match status" value="3"/>
</dbReference>
<dbReference type="PROSITE" id="PS00710">
    <property type="entry name" value="PGM_PMM"/>
    <property type="match status" value="1"/>
</dbReference>
<reference key="1">
    <citation type="journal article" date="2009" name="BMC Genomics">
        <title>Genome evolution driven by host adaptations results in a more virulent and antimicrobial-resistant Streptococcus pneumoniae serotype 14.</title>
        <authorList>
            <person name="Ding F."/>
            <person name="Tang P."/>
            <person name="Hsu M.-H."/>
            <person name="Cui P."/>
            <person name="Hu S."/>
            <person name="Yu J."/>
            <person name="Chiu C.-H."/>
        </authorList>
    </citation>
    <scope>NUCLEOTIDE SEQUENCE [LARGE SCALE GENOMIC DNA]</scope>
    <source>
        <strain>CGSP14</strain>
    </source>
</reference>
<sequence>MGKYFGTDGVRGEANLELTPELAFKLGRFGGYVLSQHETEAPKVFVGRDTRISGEMLESALVAGLLSVGIHVYKLGVLATPAVAYLVETEGASAGVMISASHNPALDNGIKFFGGDGFKLDDEKEAEIEALLDAEEDTLPRPSAEGLGILVDYPEGLRKYEGYLVSTGTPLDGMKVALDTANGAASTSARQIFADLGAQLTVIGETPDGLNINLNVGSTHPEALQEVVKESGSAIGLAFDGDSDRLIAVDENGDIVDGDKIMYIIGKYLSEKGQLAQNTIVTTVMSNLGFHKALNREGINKAVTAVGDRYVVEEMRKSGYNLGGEQSGHVILMDYNTTGDGQLSAVQLTKIMKETGKSLSELAAEVTIYPQKLVNIRVENVMKEKAMEVPAIKAIIEKMEEEMAGNGRILVRPSGTEPLLRVMAEAPTTEEVNYYVDTITDVVRAEIGID</sequence>
<evidence type="ECO:0000255" key="1">
    <source>
        <dbReference type="HAMAP-Rule" id="MF_01554"/>
    </source>
</evidence>
<keyword id="KW-0413">Isomerase</keyword>
<keyword id="KW-0460">Magnesium</keyword>
<keyword id="KW-0479">Metal-binding</keyword>
<keyword id="KW-0597">Phosphoprotein</keyword>